<dbReference type="EMBL" id="AF214947">
    <property type="protein sequence ID" value="AAG60375.1"/>
    <property type="molecule type" value="mRNA"/>
</dbReference>
<dbReference type="ConoServer" id="634">
    <property type="toxin name" value="Vn3.4 precursor"/>
</dbReference>
<dbReference type="GO" id="GO:0005576">
    <property type="term" value="C:extracellular region"/>
    <property type="evidence" value="ECO:0007669"/>
    <property type="project" value="UniProtKB-SubCell"/>
</dbReference>
<dbReference type="GO" id="GO:0008200">
    <property type="term" value="F:ion channel inhibitor activity"/>
    <property type="evidence" value="ECO:0007669"/>
    <property type="project" value="InterPro"/>
</dbReference>
<dbReference type="GO" id="GO:0090729">
    <property type="term" value="F:toxin activity"/>
    <property type="evidence" value="ECO:0007669"/>
    <property type="project" value="UniProtKB-KW"/>
</dbReference>
<dbReference type="InterPro" id="IPR004214">
    <property type="entry name" value="Conotoxin"/>
</dbReference>
<dbReference type="Pfam" id="PF02950">
    <property type="entry name" value="Conotoxin"/>
    <property type="match status" value="1"/>
</dbReference>
<accession>Q9BPH8</accession>
<organism>
    <name type="scientific">Conus ventricosus</name>
    <name type="common">Mediterranean cone</name>
    <dbReference type="NCBI Taxonomy" id="117992"/>
    <lineage>
        <taxon>Eukaryota</taxon>
        <taxon>Metazoa</taxon>
        <taxon>Spiralia</taxon>
        <taxon>Lophotrochozoa</taxon>
        <taxon>Mollusca</taxon>
        <taxon>Gastropoda</taxon>
        <taxon>Caenogastropoda</taxon>
        <taxon>Neogastropoda</taxon>
        <taxon>Conoidea</taxon>
        <taxon>Conidae</taxon>
        <taxon>Conus</taxon>
        <taxon>Lautoconus</taxon>
    </lineage>
</organism>
<reference key="1">
    <citation type="journal article" date="2001" name="Mol. Biol. Evol.">
        <title>Mechanisms for evolving hypervariability: the case of conopeptides.</title>
        <authorList>
            <person name="Conticello S.G."/>
            <person name="Gilad Y."/>
            <person name="Avidan N."/>
            <person name="Ben-Asher E."/>
            <person name="Levy Z."/>
            <person name="Fainzilber M."/>
        </authorList>
    </citation>
    <scope>NUCLEOTIDE SEQUENCE [MRNA]</scope>
    <source>
        <tissue>Venom duct</tissue>
    </source>
</reference>
<evidence type="ECO:0000250" key="1"/>
<evidence type="ECO:0000255" key="2"/>
<evidence type="ECO:0000305" key="3"/>
<feature type="signal peptide" evidence="2">
    <location>
        <begin position="1"/>
        <end position="24"/>
    </location>
</feature>
<feature type="propeptide" id="PRO_0000404922" evidence="1">
    <location>
        <begin position="25"/>
        <end position="53"/>
    </location>
</feature>
<feature type="peptide" id="PRO_0000404923" description="Conotoxin VnMLKM-01">
    <location>
        <begin position="54"/>
        <end position="70"/>
    </location>
</feature>
<feature type="disulfide bond" evidence="1">
    <location>
        <begin position="55"/>
        <end position="65"/>
    </location>
</feature>
<feature type="disulfide bond" evidence="1">
    <location>
        <begin position="56"/>
        <end position="69"/>
    </location>
</feature>
<feature type="disulfide bond" evidence="1">
    <location>
        <begin position="61"/>
        <end position="70"/>
    </location>
</feature>
<comment type="subcellular location">
    <subcellularLocation>
        <location evidence="1">Secreted</location>
    </subcellularLocation>
</comment>
<comment type="tissue specificity">
    <text>Expressed by the venom duct.</text>
</comment>
<comment type="domain">
    <text>The cysteine framework is III (CC-C-C-CC). Classified in the M-3 branch, since 3 residues stand between the fourth and the fifth cysteine residues.</text>
</comment>
<comment type="similarity">
    <text evidence="3">Belongs to the conotoxin M superfamily.</text>
</comment>
<keyword id="KW-1015">Disulfide bond</keyword>
<keyword id="KW-0528">Neurotoxin</keyword>
<keyword id="KW-0964">Secreted</keyword>
<keyword id="KW-0732">Signal</keyword>
<keyword id="KW-0800">Toxin</keyword>
<sequence length="70" mass="7990">MLKMGVMLFIFLVLFPLATLQLDADQPVERYAENKRLMSPDERRAILHAPRQRGCCEPDWCDSGCDDGCC</sequence>
<protein>
    <recommendedName>
        <fullName>Conotoxin VnMLKM-01</fullName>
    </recommendedName>
</protein>
<name>CM334_CONVE</name>
<proteinExistence type="evidence at transcript level"/>